<evidence type="ECO:0000255" key="1">
    <source>
        <dbReference type="PROSITE-ProRule" id="PRU00159"/>
    </source>
</evidence>
<evidence type="ECO:0000255" key="2">
    <source>
        <dbReference type="PROSITE-ProRule" id="PRU00191"/>
    </source>
</evidence>
<evidence type="ECO:0000255" key="3">
    <source>
        <dbReference type="PROSITE-ProRule" id="PRU00192"/>
    </source>
</evidence>
<evidence type="ECO:0000255" key="4">
    <source>
        <dbReference type="PROSITE-ProRule" id="PRU10028"/>
    </source>
</evidence>
<evidence type="ECO:0000256" key="5">
    <source>
        <dbReference type="SAM" id="MobiDB-lite"/>
    </source>
</evidence>
<evidence type="ECO:0000305" key="6"/>
<organism>
    <name type="scientific">Spongilla lacustris</name>
    <name type="common">Freshwater sponge</name>
    <dbReference type="NCBI Taxonomy" id="6055"/>
    <lineage>
        <taxon>Eukaryota</taxon>
        <taxon>Metazoa</taxon>
        <taxon>Porifera</taxon>
        <taxon>Demospongiae</taxon>
        <taxon>Heteroscleromorpha</taxon>
        <taxon>Spongillida</taxon>
        <taxon>Spongillidae</taxon>
        <taxon>Spongilla</taxon>
    </lineage>
</organism>
<name>SRK4_SPOLA</name>
<protein>
    <recommendedName>
        <fullName>Tyrosine-protein kinase isoform SRK4</fullName>
        <ecNumber>2.7.10.2</ecNumber>
    </recommendedName>
</protein>
<comment type="catalytic activity">
    <reaction evidence="4">
        <text>L-tyrosyl-[protein] + ATP = O-phospho-L-tyrosyl-[protein] + ADP + H(+)</text>
        <dbReference type="Rhea" id="RHEA:10596"/>
        <dbReference type="Rhea" id="RHEA-COMP:10136"/>
        <dbReference type="Rhea" id="RHEA-COMP:20101"/>
        <dbReference type="ChEBI" id="CHEBI:15378"/>
        <dbReference type="ChEBI" id="CHEBI:30616"/>
        <dbReference type="ChEBI" id="CHEBI:46858"/>
        <dbReference type="ChEBI" id="CHEBI:61978"/>
        <dbReference type="ChEBI" id="CHEBI:456216"/>
        <dbReference type="EC" id="2.7.10.2"/>
    </reaction>
</comment>
<comment type="subcellular location">
    <subcellularLocation>
        <location evidence="6">Cytoplasm</location>
    </subcellularLocation>
</comment>
<comment type="alternative products">
    <event type="alternative splicing"/>
    <isoform>
        <id>P42690-1</id>
        <name>SRK4</name>
        <sequence type="displayed"/>
    </isoform>
    <isoform>
        <id>P42686-1</id>
        <name>SRK1</name>
        <sequence type="external"/>
    </isoform>
</comment>
<comment type="similarity">
    <text evidence="1">Belongs to the protein kinase superfamily. Tyr protein kinase family.</text>
</comment>
<gene>
    <name type="primary">SRK1</name>
</gene>
<proteinExistence type="evidence at transcript level"/>
<dbReference type="EC" id="2.7.10.2"/>
<dbReference type="EMBL" id="X61604">
    <property type="protein sequence ID" value="CAA43801.1"/>
    <property type="molecule type" value="mRNA"/>
</dbReference>
<dbReference type="PIR" id="S24553">
    <property type="entry name" value="S24553"/>
</dbReference>
<dbReference type="SMR" id="P42690"/>
<dbReference type="BRENDA" id="2.7.10.2">
    <property type="organism ID" value="5838"/>
</dbReference>
<dbReference type="GO" id="GO:0005737">
    <property type="term" value="C:cytoplasm"/>
    <property type="evidence" value="ECO:0007669"/>
    <property type="project" value="UniProtKB-SubCell"/>
</dbReference>
<dbReference type="GO" id="GO:0005524">
    <property type="term" value="F:ATP binding"/>
    <property type="evidence" value="ECO:0007669"/>
    <property type="project" value="UniProtKB-KW"/>
</dbReference>
<dbReference type="GO" id="GO:0004715">
    <property type="term" value="F:non-membrane spanning protein tyrosine kinase activity"/>
    <property type="evidence" value="ECO:0007669"/>
    <property type="project" value="UniProtKB-EC"/>
</dbReference>
<dbReference type="CDD" id="cd09933">
    <property type="entry name" value="SH2_Src_family"/>
    <property type="match status" value="1"/>
</dbReference>
<dbReference type="CDD" id="cd11845">
    <property type="entry name" value="SH3_Src_like"/>
    <property type="match status" value="1"/>
</dbReference>
<dbReference type="FunFam" id="1.10.510.10:FF:000052">
    <property type="entry name" value="Tyrosine-protein kinase"/>
    <property type="match status" value="1"/>
</dbReference>
<dbReference type="FunFam" id="2.30.30.40:FF:000229">
    <property type="entry name" value="Tyrosine-protein kinase"/>
    <property type="match status" value="1"/>
</dbReference>
<dbReference type="FunFam" id="3.30.200.20:FF:000053">
    <property type="entry name" value="Tyrosine-protein kinase"/>
    <property type="match status" value="1"/>
</dbReference>
<dbReference type="FunFam" id="3.30.505.10:FF:000044">
    <property type="entry name" value="Tyrosine-protein kinase"/>
    <property type="match status" value="1"/>
</dbReference>
<dbReference type="Gene3D" id="3.30.200.20">
    <property type="entry name" value="Phosphorylase Kinase, domain 1"/>
    <property type="match status" value="1"/>
</dbReference>
<dbReference type="Gene3D" id="3.30.505.10">
    <property type="entry name" value="SH2 domain"/>
    <property type="match status" value="1"/>
</dbReference>
<dbReference type="Gene3D" id="2.30.30.40">
    <property type="entry name" value="SH3 Domains"/>
    <property type="match status" value="1"/>
</dbReference>
<dbReference type="Gene3D" id="1.10.510.10">
    <property type="entry name" value="Transferase(Phosphotransferase) domain 1"/>
    <property type="match status" value="1"/>
</dbReference>
<dbReference type="InterPro" id="IPR011009">
    <property type="entry name" value="Kinase-like_dom_sf"/>
</dbReference>
<dbReference type="InterPro" id="IPR050198">
    <property type="entry name" value="Non-receptor_tyrosine_kinases"/>
</dbReference>
<dbReference type="InterPro" id="IPR000719">
    <property type="entry name" value="Prot_kinase_dom"/>
</dbReference>
<dbReference type="InterPro" id="IPR017441">
    <property type="entry name" value="Protein_kinase_ATP_BS"/>
</dbReference>
<dbReference type="InterPro" id="IPR001245">
    <property type="entry name" value="Ser-Thr/Tyr_kinase_cat_dom"/>
</dbReference>
<dbReference type="InterPro" id="IPR000980">
    <property type="entry name" value="SH2"/>
</dbReference>
<dbReference type="InterPro" id="IPR036860">
    <property type="entry name" value="SH2_dom_sf"/>
</dbReference>
<dbReference type="InterPro" id="IPR036028">
    <property type="entry name" value="SH3-like_dom_sf"/>
</dbReference>
<dbReference type="InterPro" id="IPR001452">
    <property type="entry name" value="SH3_domain"/>
</dbReference>
<dbReference type="InterPro" id="IPR008266">
    <property type="entry name" value="Tyr_kinase_AS"/>
</dbReference>
<dbReference type="InterPro" id="IPR020635">
    <property type="entry name" value="Tyr_kinase_cat_dom"/>
</dbReference>
<dbReference type="PANTHER" id="PTHR24418">
    <property type="entry name" value="TYROSINE-PROTEIN KINASE"/>
    <property type="match status" value="1"/>
</dbReference>
<dbReference type="Pfam" id="PF07714">
    <property type="entry name" value="PK_Tyr_Ser-Thr"/>
    <property type="match status" value="1"/>
</dbReference>
<dbReference type="Pfam" id="PF00017">
    <property type="entry name" value="SH2"/>
    <property type="match status" value="1"/>
</dbReference>
<dbReference type="Pfam" id="PF00018">
    <property type="entry name" value="SH3_1"/>
    <property type="match status" value="1"/>
</dbReference>
<dbReference type="PRINTS" id="PR00401">
    <property type="entry name" value="SH2DOMAIN"/>
</dbReference>
<dbReference type="PRINTS" id="PR00452">
    <property type="entry name" value="SH3DOMAIN"/>
</dbReference>
<dbReference type="PRINTS" id="PR00109">
    <property type="entry name" value="TYRKINASE"/>
</dbReference>
<dbReference type="SMART" id="SM00252">
    <property type="entry name" value="SH2"/>
    <property type="match status" value="1"/>
</dbReference>
<dbReference type="SMART" id="SM00326">
    <property type="entry name" value="SH3"/>
    <property type="match status" value="1"/>
</dbReference>
<dbReference type="SMART" id="SM00219">
    <property type="entry name" value="TyrKc"/>
    <property type="match status" value="1"/>
</dbReference>
<dbReference type="SUPFAM" id="SSF56112">
    <property type="entry name" value="Protein kinase-like (PK-like)"/>
    <property type="match status" value="1"/>
</dbReference>
<dbReference type="SUPFAM" id="SSF55550">
    <property type="entry name" value="SH2 domain"/>
    <property type="match status" value="1"/>
</dbReference>
<dbReference type="SUPFAM" id="SSF50044">
    <property type="entry name" value="SH3-domain"/>
    <property type="match status" value="1"/>
</dbReference>
<dbReference type="PROSITE" id="PS00107">
    <property type="entry name" value="PROTEIN_KINASE_ATP"/>
    <property type="match status" value="1"/>
</dbReference>
<dbReference type="PROSITE" id="PS50011">
    <property type="entry name" value="PROTEIN_KINASE_DOM"/>
    <property type="match status" value="1"/>
</dbReference>
<dbReference type="PROSITE" id="PS00109">
    <property type="entry name" value="PROTEIN_KINASE_TYR"/>
    <property type="match status" value="1"/>
</dbReference>
<dbReference type="PROSITE" id="PS50001">
    <property type="entry name" value="SH2"/>
    <property type="match status" value="1"/>
</dbReference>
<dbReference type="PROSITE" id="PS50002">
    <property type="entry name" value="SH3"/>
    <property type="match status" value="1"/>
</dbReference>
<feature type="chain" id="PRO_0000088157" description="Tyrosine-protein kinase isoform SRK4">
    <location>
        <begin position="1"/>
        <end position="506"/>
    </location>
</feature>
<feature type="domain" description="SH3" evidence="3">
    <location>
        <begin position="54"/>
        <end position="116"/>
    </location>
</feature>
<feature type="domain" description="SH2" evidence="2">
    <location>
        <begin position="122"/>
        <end position="214"/>
    </location>
</feature>
<feature type="domain" description="Protein kinase" evidence="1">
    <location>
        <begin position="240"/>
        <end position="493"/>
    </location>
</feature>
<feature type="region of interest" description="Disordered" evidence="5">
    <location>
        <begin position="1"/>
        <end position="53"/>
    </location>
</feature>
<feature type="compositionally biased region" description="Polar residues" evidence="5">
    <location>
        <begin position="1"/>
        <end position="10"/>
    </location>
</feature>
<feature type="compositionally biased region" description="Polar residues" evidence="5">
    <location>
        <begin position="18"/>
        <end position="31"/>
    </location>
</feature>
<feature type="active site" description="Proton acceptor" evidence="1 4">
    <location>
        <position position="359"/>
    </location>
</feature>
<feature type="binding site" evidence="1">
    <location>
        <begin position="246"/>
        <end position="254"/>
    </location>
    <ligand>
        <name>ATP</name>
        <dbReference type="ChEBI" id="CHEBI:30616"/>
    </ligand>
</feature>
<feature type="binding site" evidence="1">
    <location>
        <position position="268"/>
    </location>
    <ligand>
        <name>ATP</name>
        <dbReference type="ChEBI" id="CHEBI:30616"/>
    </ligand>
</feature>
<accession>P42690</accession>
<reference key="1">
    <citation type="journal article" date="1992" name="Oncogene">
        <title>Multiple src-related kinase genes, srk1-4, in the fresh water sponge Spongilla lacustris.</title>
        <authorList>
            <person name="Ottilie S."/>
            <person name="Raulf F."/>
            <person name="Barnekow A."/>
            <person name="Hannig G."/>
            <person name="Schartl M."/>
        </authorList>
    </citation>
    <scope>NUCLEOTIDE SEQUENCE [MRNA]</scope>
</reference>
<keyword id="KW-0025">Alternative splicing</keyword>
<keyword id="KW-0067">ATP-binding</keyword>
<keyword id="KW-0963">Cytoplasm</keyword>
<keyword id="KW-0418">Kinase</keyword>
<keyword id="KW-0547">Nucleotide-binding</keyword>
<keyword id="KW-0597">Phosphoprotein</keyword>
<keyword id="KW-0727">SH2 domain</keyword>
<keyword id="KW-0728">SH3 domain</keyword>
<keyword id="KW-0808">Transferase</keyword>
<keyword id="KW-0829">Tyrosine-protein kinase</keyword>
<sequence>MGSCCSSQDGDGNGKATAGSTVDSHELSQSVKGKIKQPEPKPKPPPQVPPAQDVKYPIYVGKYDYDSRTDDDLSFKKGDLMYIISTDEGDWWFARSKDTAGKEGYIPSNYVAEYKSLDAEEWFFGQVKRVDAEKQLMMPFNNLGSFLIRDSDTTPGDFSLSVRDIDRVRHYRIKKLENGTYFVTRRLTFQSIQELVAYYTQQADGLCVNLKGPCMVMEKPQTAGLSKQANEEWEIEKKQIKLLRGLGAGQFGEVWEGLWNGTTSVAVKTLKPGTMSIEEFLEEASIMKQLRHPKLIQLYAVCTKEEPIYIVTELMKHGSLLEYLRGDGRSLKLPDLVDMCSQVASGMSYLEQQNYIHRDLAARNILVGEHKICKVADFGLARVIDEEIYEAKLGAKFPIKWTAPEAAMYSRFTIKSDVWSFGIVLYEVITYGRFPYPGMTNAQVLEQIQQSYRMPRPMGCPEKLYAIMMDCWREDPASRPTFETLSWQLEEFFTTGDDAGYKDMER</sequence>